<keyword id="KW-0002">3D-structure</keyword>
<keyword id="KW-0028">Amino-acid biosynthesis</keyword>
<keyword id="KW-0067">ATP-binding</keyword>
<keyword id="KW-0963">Cytoplasm</keyword>
<keyword id="KW-0418">Kinase</keyword>
<keyword id="KW-0547">Nucleotide-binding</keyword>
<keyword id="KW-0641">Proline biosynthesis</keyword>
<keyword id="KW-0808">Transferase</keyword>
<gene>
    <name evidence="1" type="primary">proB</name>
    <name type="ordered locus">BTH_I1143</name>
</gene>
<accession>Q2SZF9</accession>
<sequence>MRSIIADSKRLVVKVGSSLVTNDGRGLDHDAIGRWAAQIAALRNEGKEVVLVSSGAIAEGMQRLGWSRRPREIDELQAAAAVGQMGLAQVYESRFAEHGIRTAQILLTHADLADRERYLNARSTLLTLLRLGVVPIINENDTVVTDEIKFGDNDTLGALVANLIEGDALIILTDQQGLFTADPRKDPGATLVAEASAGAPELEAMAGGAGSSIGRGGMLTKILAAKRAAHSGANTVIASGRERDVLLRLASGEAIGTQLIARTARMAARKQWMADHLQVRGHVVIDAGAVDKLTAGGKSLLPIGVVAVQGVFARGEVIACVNDAGREVARGITNYSSAEAKLIQRKPSGEIEAVLGYMLEPELIHRDNLVLV</sequence>
<reference key="1">
    <citation type="journal article" date="2005" name="BMC Genomics">
        <title>Bacterial genome adaptation to niches: divergence of the potential virulence genes in three Burkholderia species of different survival strategies.</title>
        <authorList>
            <person name="Kim H.S."/>
            <person name="Schell M.A."/>
            <person name="Yu Y."/>
            <person name="Ulrich R.L."/>
            <person name="Sarria S.H."/>
            <person name="Nierman W.C."/>
            <person name="DeShazer D."/>
        </authorList>
    </citation>
    <scope>NUCLEOTIDE SEQUENCE [LARGE SCALE GENOMIC DNA]</scope>
    <source>
        <strain>ATCC 700388 / DSM 13276 / CCUG 48851 / CIP 106301 / E264</strain>
    </source>
</reference>
<organism>
    <name type="scientific">Burkholderia thailandensis (strain ATCC 700388 / DSM 13276 / CCUG 48851 / CIP 106301 / E264)</name>
    <dbReference type="NCBI Taxonomy" id="271848"/>
    <lineage>
        <taxon>Bacteria</taxon>
        <taxon>Pseudomonadati</taxon>
        <taxon>Pseudomonadota</taxon>
        <taxon>Betaproteobacteria</taxon>
        <taxon>Burkholderiales</taxon>
        <taxon>Burkholderiaceae</taxon>
        <taxon>Burkholderia</taxon>
        <taxon>pseudomallei group</taxon>
    </lineage>
</organism>
<evidence type="ECO:0000255" key="1">
    <source>
        <dbReference type="HAMAP-Rule" id="MF_00456"/>
    </source>
</evidence>
<evidence type="ECO:0007829" key="2">
    <source>
        <dbReference type="PDB" id="4Q1T"/>
    </source>
</evidence>
<name>PROB_BURTA</name>
<comment type="function">
    <text evidence="1">Catalyzes the transfer of a phosphate group to glutamate to form L-glutamate 5-phosphate.</text>
</comment>
<comment type="catalytic activity">
    <reaction evidence="1">
        <text>L-glutamate + ATP = L-glutamyl 5-phosphate + ADP</text>
        <dbReference type="Rhea" id="RHEA:14877"/>
        <dbReference type="ChEBI" id="CHEBI:29985"/>
        <dbReference type="ChEBI" id="CHEBI:30616"/>
        <dbReference type="ChEBI" id="CHEBI:58274"/>
        <dbReference type="ChEBI" id="CHEBI:456216"/>
        <dbReference type="EC" id="2.7.2.11"/>
    </reaction>
</comment>
<comment type="pathway">
    <text evidence="1">Amino-acid biosynthesis; L-proline biosynthesis; L-glutamate 5-semialdehyde from L-glutamate: step 1/2.</text>
</comment>
<comment type="subcellular location">
    <subcellularLocation>
        <location evidence="1">Cytoplasm</location>
    </subcellularLocation>
</comment>
<comment type="similarity">
    <text evidence="1">Belongs to the glutamate 5-kinase family.</text>
</comment>
<protein>
    <recommendedName>
        <fullName evidence="1">Glutamate 5-kinase</fullName>
        <ecNumber evidence="1">2.7.2.11</ecNumber>
    </recommendedName>
    <alternativeName>
        <fullName evidence="1">Gamma-glutamyl kinase</fullName>
        <shortName evidence="1">GK</shortName>
    </alternativeName>
</protein>
<feature type="chain" id="PRO_0000252973" description="Glutamate 5-kinase">
    <location>
        <begin position="1"/>
        <end position="372"/>
    </location>
</feature>
<feature type="domain" description="PUA" evidence="1">
    <location>
        <begin position="280"/>
        <end position="358"/>
    </location>
</feature>
<feature type="binding site" evidence="1">
    <location>
        <position position="14"/>
    </location>
    <ligand>
        <name>ATP</name>
        <dbReference type="ChEBI" id="CHEBI:30616"/>
    </ligand>
</feature>
<feature type="binding site" evidence="1">
    <location>
        <position position="54"/>
    </location>
    <ligand>
        <name>substrate</name>
    </ligand>
</feature>
<feature type="binding site" evidence="1">
    <location>
        <position position="141"/>
    </location>
    <ligand>
        <name>substrate</name>
    </ligand>
</feature>
<feature type="binding site" evidence="1">
    <location>
        <position position="153"/>
    </location>
    <ligand>
        <name>substrate</name>
    </ligand>
</feature>
<feature type="binding site" evidence="1">
    <location>
        <begin position="173"/>
        <end position="174"/>
    </location>
    <ligand>
        <name>ATP</name>
        <dbReference type="ChEBI" id="CHEBI:30616"/>
    </ligand>
</feature>
<feature type="helix" evidence="2">
    <location>
        <begin position="4"/>
        <end position="7"/>
    </location>
</feature>
<feature type="strand" evidence="2">
    <location>
        <begin position="9"/>
        <end position="15"/>
    </location>
</feature>
<feature type="helix" evidence="2">
    <location>
        <begin position="17"/>
        <end position="20"/>
    </location>
</feature>
<feature type="helix" evidence="2">
    <location>
        <begin position="29"/>
        <end position="44"/>
    </location>
</feature>
<feature type="strand" evidence="2">
    <location>
        <begin position="48"/>
        <end position="53"/>
    </location>
</feature>
<feature type="helix" evidence="2">
    <location>
        <begin position="56"/>
        <end position="64"/>
    </location>
</feature>
<feature type="helix" evidence="2">
    <location>
        <begin position="73"/>
        <end position="96"/>
    </location>
</feature>
<feature type="turn" evidence="2">
    <location>
        <begin position="97"/>
        <end position="99"/>
    </location>
</feature>
<feature type="strand" evidence="2">
    <location>
        <begin position="102"/>
        <end position="107"/>
    </location>
</feature>
<feature type="helix" evidence="2">
    <location>
        <begin position="109"/>
        <end position="113"/>
    </location>
</feature>
<feature type="helix" evidence="2">
    <location>
        <begin position="115"/>
        <end position="130"/>
    </location>
</feature>
<feature type="strand" evidence="2">
    <location>
        <begin position="134"/>
        <end position="139"/>
    </location>
</feature>
<feature type="turn" evidence="2">
    <location>
        <begin position="141"/>
        <end position="143"/>
    </location>
</feature>
<feature type="turn" evidence="2">
    <location>
        <begin position="146"/>
        <end position="148"/>
    </location>
</feature>
<feature type="helix" evidence="2">
    <location>
        <begin position="154"/>
        <end position="164"/>
    </location>
</feature>
<feature type="strand" evidence="2">
    <location>
        <begin position="167"/>
        <end position="175"/>
    </location>
</feature>
<feature type="strand" evidence="2">
    <location>
        <begin position="193"/>
        <end position="196"/>
    </location>
</feature>
<feature type="helix" evidence="2">
    <location>
        <begin position="219"/>
        <end position="229"/>
    </location>
</feature>
<feature type="turn" evidence="2">
    <location>
        <begin position="230"/>
        <end position="232"/>
    </location>
</feature>
<feature type="strand" evidence="2">
    <location>
        <begin position="234"/>
        <end position="239"/>
    </location>
</feature>
<feature type="helix" evidence="2">
    <location>
        <begin position="245"/>
        <end position="250"/>
    </location>
</feature>
<feature type="strand" evidence="2">
    <location>
        <begin position="256"/>
        <end position="260"/>
    </location>
</feature>
<feature type="helix" evidence="2">
    <location>
        <begin position="265"/>
        <end position="276"/>
    </location>
</feature>
<feature type="strand" evidence="2">
    <location>
        <begin position="277"/>
        <end position="285"/>
    </location>
</feature>
<feature type="helix" evidence="2">
    <location>
        <begin position="287"/>
        <end position="294"/>
    </location>
</feature>
<feature type="helix" evidence="2">
    <location>
        <begin position="302"/>
        <end position="304"/>
    </location>
</feature>
<feature type="strand" evidence="2">
    <location>
        <begin position="305"/>
        <end position="310"/>
    </location>
</feature>
<feature type="strand" evidence="2">
    <location>
        <begin position="317"/>
        <end position="321"/>
    </location>
</feature>
<feature type="strand" evidence="2">
    <location>
        <begin position="327"/>
        <end position="332"/>
    </location>
</feature>
<feature type="helix" evidence="2">
    <location>
        <begin position="337"/>
        <end position="343"/>
    </location>
</feature>
<feature type="helix" evidence="2">
    <location>
        <begin position="348"/>
        <end position="350"/>
    </location>
</feature>
<feature type="helix" evidence="2">
    <location>
        <begin position="351"/>
        <end position="355"/>
    </location>
</feature>
<feature type="helix" evidence="2">
    <location>
        <begin position="366"/>
        <end position="368"/>
    </location>
</feature>
<feature type="strand" evidence="2">
    <location>
        <begin position="369"/>
        <end position="371"/>
    </location>
</feature>
<proteinExistence type="evidence at protein level"/>
<dbReference type="EC" id="2.7.2.11" evidence="1"/>
<dbReference type="EMBL" id="CP000086">
    <property type="protein sequence ID" value="ABC38938.1"/>
    <property type="molecule type" value="Genomic_DNA"/>
</dbReference>
<dbReference type="RefSeq" id="WP_009888926.1">
    <property type="nucleotide sequence ID" value="NZ_CP008785.1"/>
</dbReference>
<dbReference type="PDB" id="4Q1T">
    <property type="method" value="X-ray"/>
    <property type="resolution" value="2.15 A"/>
    <property type="chains" value="A/B/C/D=1-372"/>
</dbReference>
<dbReference type="PDBsum" id="4Q1T"/>
<dbReference type="SMR" id="Q2SZF9"/>
<dbReference type="GeneID" id="45120895"/>
<dbReference type="KEGG" id="bte:BTH_I1143"/>
<dbReference type="HOGENOM" id="CLU_025400_2_0_4"/>
<dbReference type="UniPathway" id="UPA00098">
    <property type="reaction ID" value="UER00359"/>
</dbReference>
<dbReference type="EvolutionaryTrace" id="Q2SZF9"/>
<dbReference type="Proteomes" id="UP000001930">
    <property type="component" value="Chromosome I"/>
</dbReference>
<dbReference type="GO" id="GO:0005829">
    <property type="term" value="C:cytosol"/>
    <property type="evidence" value="ECO:0007669"/>
    <property type="project" value="TreeGrafter"/>
</dbReference>
<dbReference type="GO" id="GO:0005524">
    <property type="term" value="F:ATP binding"/>
    <property type="evidence" value="ECO:0007669"/>
    <property type="project" value="UniProtKB-KW"/>
</dbReference>
<dbReference type="GO" id="GO:0004349">
    <property type="term" value="F:glutamate 5-kinase activity"/>
    <property type="evidence" value="ECO:0007669"/>
    <property type="project" value="UniProtKB-UniRule"/>
</dbReference>
<dbReference type="GO" id="GO:0003723">
    <property type="term" value="F:RNA binding"/>
    <property type="evidence" value="ECO:0007669"/>
    <property type="project" value="InterPro"/>
</dbReference>
<dbReference type="GO" id="GO:0055129">
    <property type="term" value="P:L-proline biosynthetic process"/>
    <property type="evidence" value="ECO:0007669"/>
    <property type="project" value="UniProtKB-UniRule"/>
</dbReference>
<dbReference type="CDD" id="cd04242">
    <property type="entry name" value="AAK_G5K_ProB"/>
    <property type="match status" value="1"/>
</dbReference>
<dbReference type="CDD" id="cd21157">
    <property type="entry name" value="PUA_G5K"/>
    <property type="match status" value="1"/>
</dbReference>
<dbReference type="FunFam" id="2.30.130.10:FF:000007">
    <property type="entry name" value="Glutamate 5-kinase"/>
    <property type="match status" value="1"/>
</dbReference>
<dbReference type="FunFam" id="3.40.1160.10:FF:000018">
    <property type="entry name" value="Glutamate 5-kinase"/>
    <property type="match status" value="1"/>
</dbReference>
<dbReference type="Gene3D" id="3.40.1160.10">
    <property type="entry name" value="Acetylglutamate kinase-like"/>
    <property type="match status" value="1"/>
</dbReference>
<dbReference type="Gene3D" id="2.30.130.10">
    <property type="entry name" value="PUA domain"/>
    <property type="match status" value="1"/>
</dbReference>
<dbReference type="HAMAP" id="MF_00456">
    <property type="entry name" value="ProB"/>
    <property type="match status" value="1"/>
</dbReference>
<dbReference type="InterPro" id="IPR036393">
    <property type="entry name" value="AceGlu_kinase-like_sf"/>
</dbReference>
<dbReference type="InterPro" id="IPR001048">
    <property type="entry name" value="Asp/Glu/Uridylate_kinase"/>
</dbReference>
<dbReference type="InterPro" id="IPR041739">
    <property type="entry name" value="G5K_ProB"/>
</dbReference>
<dbReference type="InterPro" id="IPR001057">
    <property type="entry name" value="Glu/AcGlu_kinase"/>
</dbReference>
<dbReference type="InterPro" id="IPR011529">
    <property type="entry name" value="Glu_5kinase"/>
</dbReference>
<dbReference type="InterPro" id="IPR005715">
    <property type="entry name" value="Glu_5kinase/COase_Synthase"/>
</dbReference>
<dbReference type="InterPro" id="IPR019797">
    <property type="entry name" value="Glutamate_5-kinase_CS"/>
</dbReference>
<dbReference type="InterPro" id="IPR002478">
    <property type="entry name" value="PUA"/>
</dbReference>
<dbReference type="InterPro" id="IPR015947">
    <property type="entry name" value="PUA-like_sf"/>
</dbReference>
<dbReference type="InterPro" id="IPR036974">
    <property type="entry name" value="PUA_sf"/>
</dbReference>
<dbReference type="NCBIfam" id="TIGR01027">
    <property type="entry name" value="proB"/>
    <property type="match status" value="1"/>
</dbReference>
<dbReference type="PANTHER" id="PTHR43654">
    <property type="entry name" value="GLUTAMATE 5-KINASE"/>
    <property type="match status" value="1"/>
</dbReference>
<dbReference type="PANTHER" id="PTHR43654:SF1">
    <property type="entry name" value="ISOPENTENYL PHOSPHATE KINASE"/>
    <property type="match status" value="1"/>
</dbReference>
<dbReference type="Pfam" id="PF00696">
    <property type="entry name" value="AA_kinase"/>
    <property type="match status" value="1"/>
</dbReference>
<dbReference type="Pfam" id="PF01472">
    <property type="entry name" value="PUA"/>
    <property type="match status" value="1"/>
</dbReference>
<dbReference type="PIRSF" id="PIRSF000729">
    <property type="entry name" value="GK"/>
    <property type="match status" value="1"/>
</dbReference>
<dbReference type="PRINTS" id="PR00474">
    <property type="entry name" value="GLU5KINASE"/>
</dbReference>
<dbReference type="SMART" id="SM00359">
    <property type="entry name" value="PUA"/>
    <property type="match status" value="1"/>
</dbReference>
<dbReference type="SUPFAM" id="SSF53633">
    <property type="entry name" value="Carbamate kinase-like"/>
    <property type="match status" value="1"/>
</dbReference>
<dbReference type="SUPFAM" id="SSF88697">
    <property type="entry name" value="PUA domain-like"/>
    <property type="match status" value="1"/>
</dbReference>
<dbReference type="PROSITE" id="PS00902">
    <property type="entry name" value="GLUTAMATE_5_KINASE"/>
    <property type="match status" value="1"/>
</dbReference>
<dbReference type="PROSITE" id="PS50890">
    <property type="entry name" value="PUA"/>
    <property type="match status" value="1"/>
</dbReference>